<reference key="1">
    <citation type="submission" date="2000-05" db="EMBL/GenBank/DDBJ databases">
        <title>Molecular cloning and characterization of a full-length cDNA encoding a novel KRAB type zinc finger protein.</title>
        <authorList>
            <person name="Mao Y.-M."/>
            <person name="Xie Y."/>
            <person name="Zhao W."/>
            <person name="Kang Y."/>
            <person name="Lin S.-R."/>
            <person name="Sun Z.-H."/>
            <person name="Zhou Z."/>
        </authorList>
    </citation>
    <scope>NUCLEOTIDE SEQUENCE [MRNA] (ISOFORM 1)</scope>
</reference>
<reference key="2">
    <citation type="submission" date="2000-12" db="EMBL/GenBank/DDBJ databases">
        <title>A novel KRAB ZFP gene involved in hepatic cancer.</title>
        <authorList>
            <person name="Mao Y.-M."/>
            <person name="Xie Y."/>
            <person name="Wang Z."/>
            <person name="Ying K."/>
            <person name="Lin S.-R."/>
            <person name="Deng Y.-F."/>
            <person name="Sun Z.-H."/>
        </authorList>
    </citation>
    <scope>NUCLEOTIDE SEQUENCE [MRNA] (ISOFORM 2)</scope>
</reference>
<reference key="3">
    <citation type="submission" date="1999-06" db="EMBL/GenBank/DDBJ databases">
        <title>A novel gene expressed in human adrenal gland.</title>
        <authorList>
            <person name="Gu J."/>
            <person name="Fu S."/>
            <person name="Ren S."/>
            <person name="Jin W."/>
            <person name="Gu Y."/>
            <person name="Huang Q."/>
            <person name="Dong H."/>
            <person name="Yu Y."/>
            <person name="Fu G."/>
            <person name="Wang Y."/>
            <person name="Chen Z."/>
            <person name="Han Z."/>
        </authorList>
    </citation>
    <scope>NUCLEOTIDE SEQUENCE [MRNA] (ISOFORM 2)</scope>
    <source>
        <tissue>Adrenal gland</tissue>
    </source>
</reference>
<reference key="4">
    <citation type="journal article" date="2007" name="BMC Genomics">
        <title>The full-ORF clone resource of the German cDNA consortium.</title>
        <authorList>
            <person name="Bechtel S."/>
            <person name="Rosenfelder H."/>
            <person name="Duda A."/>
            <person name="Schmidt C.P."/>
            <person name="Ernst U."/>
            <person name="Wellenreuther R."/>
            <person name="Mehrle A."/>
            <person name="Schuster C."/>
            <person name="Bahr A."/>
            <person name="Bloecker H."/>
            <person name="Heubner D."/>
            <person name="Hoerlein A."/>
            <person name="Michel G."/>
            <person name="Wedler H."/>
            <person name="Koehrer K."/>
            <person name="Ottenwaelder B."/>
            <person name="Poustka A."/>
            <person name="Wiemann S."/>
            <person name="Schupp I."/>
        </authorList>
    </citation>
    <scope>NUCLEOTIDE SEQUENCE [LARGE SCALE MRNA] (ISOFORM 2)</scope>
    <source>
        <tissue>Testis</tissue>
    </source>
</reference>
<reference key="5">
    <citation type="journal article" date="2004" name="Genome Res.">
        <title>The status, quality, and expansion of the NIH full-length cDNA project: the Mammalian Gene Collection (MGC).</title>
        <authorList>
            <consortium name="The MGC Project Team"/>
        </authorList>
    </citation>
    <scope>NUCLEOTIDE SEQUENCE [LARGE SCALE MRNA] (ISOFORM 2)</scope>
    <source>
        <tissue>Testis</tissue>
    </source>
</reference>
<reference key="6">
    <citation type="journal article" date="2014" name="Nat. Struct. Mol. Biol.">
        <title>Uncovering global SUMOylation signaling networks in a site-specific manner.</title>
        <authorList>
            <person name="Hendriks I.A."/>
            <person name="D'Souza R.C."/>
            <person name="Yang B."/>
            <person name="Verlaan-de Vries M."/>
            <person name="Mann M."/>
            <person name="Vertegaal A.C."/>
        </authorList>
    </citation>
    <scope>SUMOYLATION [LARGE SCALE ANALYSIS] AT LYS-183</scope>
    <scope>IDENTIFICATION BY MASS SPECTROMETRY [LARGE SCALE ANALYSIS]</scope>
</reference>
<reference key="7">
    <citation type="journal article" date="2017" name="Nat. Struct. Mol. Biol.">
        <title>Site-specific mapping of the human SUMO proteome reveals co-modification with phosphorylation.</title>
        <authorList>
            <person name="Hendriks I.A."/>
            <person name="Lyon D."/>
            <person name="Young C."/>
            <person name="Jensen L.J."/>
            <person name="Vertegaal A.C."/>
            <person name="Nielsen M.L."/>
        </authorList>
    </citation>
    <scope>SUMOYLATION [LARGE SCALE ANALYSIS] AT LYS-183</scope>
    <scope>IDENTIFICATION BY MASS SPECTROMETRY [LARGE SCALE ANALYSIS]</scope>
</reference>
<protein>
    <recommendedName>
        <fullName>Zinc finger protein 302</fullName>
    </recommendedName>
    <alternativeName>
        <fullName>Zinc finger protein 135-like</fullName>
    </alternativeName>
    <alternativeName>
        <fullName>Zinc finger protein 140-like</fullName>
    </alternativeName>
    <alternativeName>
        <fullName>Zinc finger protein 327</fullName>
    </alternativeName>
</protein>
<accession>Q9NR11</accession>
<accession>Q658J3</accession>
<accession>Q9BZD8</accession>
<accession>Q9P0J4</accession>
<gene>
    <name type="primary">ZNF302</name>
    <name type="synonym">ZNF135L</name>
    <name type="synonym">ZNF140L</name>
    <name type="synonym">ZNF327</name>
</gene>
<dbReference type="EMBL" id="AF265236">
    <property type="protein sequence ID" value="AAF74775.1"/>
    <property type="molecule type" value="mRNA"/>
</dbReference>
<dbReference type="EMBL" id="AF326206">
    <property type="protein sequence ID" value="AAK11224.1"/>
    <property type="molecule type" value="mRNA"/>
</dbReference>
<dbReference type="EMBL" id="AF155656">
    <property type="protein sequence ID" value="AAF67475.1"/>
    <property type="molecule type" value="mRNA"/>
</dbReference>
<dbReference type="EMBL" id="AL834318">
    <property type="protein sequence ID" value="CAD38987.1"/>
    <property type="molecule type" value="mRNA"/>
</dbReference>
<dbReference type="EMBL" id="BC024176">
    <property type="protein sequence ID" value="AAH24176.1"/>
    <property type="molecule type" value="mRNA"/>
</dbReference>
<dbReference type="CCDS" id="CCDS46042.1">
    <molecule id="Q9NR11-2"/>
</dbReference>
<dbReference type="RefSeq" id="NP_001012320.1">
    <molecule id="Q9NR11-2"/>
    <property type="nucleotide sequence ID" value="NM_001012320.3"/>
</dbReference>
<dbReference type="RefSeq" id="NP_001276110.1">
    <property type="nucleotide sequence ID" value="NM_001289181.1"/>
</dbReference>
<dbReference type="RefSeq" id="NP_001276111.1">
    <property type="nucleotide sequence ID" value="NM_001289182.1"/>
</dbReference>
<dbReference type="RefSeq" id="NP_001276112.1">
    <molecule id="Q9NR11-2"/>
    <property type="nucleotide sequence ID" value="NM_001289183.2"/>
</dbReference>
<dbReference type="RefSeq" id="NP_001276113.1">
    <property type="nucleotide sequence ID" value="NM_001289184.1"/>
</dbReference>
<dbReference type="RefSeq" id="NP_001276114.1">
    <property type="nucleotide sequence ID" value="NM_001289185.1"/>
</dbReference>
<dbReference type="RefSeq" id="NP_001276115.1">
    <molecule id="Q9NR11-2"/>
    <property type="nucleotide sequence ID" value="NM_001289186.2"/>
</dbReference>
<dbReference type="RefSeq" id="NP_001276116.1">
    <molecule id="Q9NR11-2"/>
    <property type="nucleotide sequence ID" value="NM_001289187.2"/>
</dbReference>
<dbReference type="RefSeq" id="NP_001276117.1">
    <property type="nucleotide sequence ID" value="NM_001289188.1"/>
</dbReference>
<dbReference type="RefSeq" id="NP_001276118.1">
    <property type="nucleotide sequence ID" value="NM_001289189.1"/>
</dbReference>
<dbReference type="RefSeq" id="NP_001276119.1">
    <property type="nucleotide sequence ID" value="NM_001289190.1"/>
</dbReference>
<dbReference type="RefSeq" id="NP_001276120.1">
    <property type="nucleotide sequence ID" value="NM_001289191.1"/>
</dbReference>
<dbReference type="RefSeq" id="NP_001276121.1">
    <property type="nucleotide sequence ID" value="NM_001289192.1"/>
</dbReference>
<dbReference type="RefSeq" id="NP_060913.2">
    <molecule id="Q9NR11-2"/>
    <property type="nucleotide sequence ID" value="NM_018443.4"/>
</dbReference>
<dbReference type="RefSeq" id="NP_061145.2">
    <property type="nucleotide sequence ID" value="NM_018675.2"/>
</dbReference>
<dbReference type="RefSeq" id="XP_047295052.1">
    <molecule id="Q9NR11-2"/>
    <property type="nucleotide sequence ID" value="XM_047439096.1"/>
</dbReference>
<dbReference type="RefSeq" id="XP_047295053.1">
    <molecule id="Q9NR11-2"/>
    <property type="nucleotide sequence ID" value="XM_047439097.1"/>
</dbReference>
<dbReference type="SMR" id="Q9NR11"/>
<dbReference type="BioGRID" id="120987">
    <property type="interactions" value="25"/>
</dbReference>
<dbReference type="FunCoup" id="Q9NR11">
    <property type="interactions" value="141"/>
</dbReference>
<dbReference type="IntAct" id="Q9NR11">
    <property type="interactions" value="25"/>
</dbReference>
<dbReference type="MINT" id="Q9NR11"/>
<dbReference type="iPTMnet" id="Q9NR11"/>
<dbReference type="PhosphoSitePlus" id="Q9NR11"/>
<dbReference type="BioMuta" id="ZNF302"/>
<dbReference type="DMDM" id="23397010"/>
<dbReference type="jPOST" id="Q9NR11"/>
<dbReference type="MassIVE" id="Q9NR11"/>
<dbReference type="PeptideAtlas" id="Q9NR11"/>
<dbReference type="ProteomicsDB" id="82242">
    <molecule id="Q9NR11-1"/>
</dbReference>
<dbReference type="ProteomicsDB" id="82243">
    <molecule id="Q9NR11-2"/>
</dbReference>
<dbReference type="Pumba" id="Q9NR11"/>
<dbReference type="Antibodypedia" id="29194">
    <property type="antibodies" value="111 antibodies from 17 providers"/>
</dbReference>
<dbReference type="DNASU" id="55900"/>
<dbReference type="Ensembl" id="ENST00000423823.6">
    <molecule id="Q9NR11-2"/>
    <property type="protein sequence ID" value="ENSP00000405219.2"/>
    <property type="gene ID" value="ENSG00000089335.22"/>
</dbReference>
<dbReference type="Ensembl" id="ENST00000457781.6">
    <molecule id="Q9NR11-2"/>
    <property type="protein sequence ID" value="ENSP00000391067.2"/>
    <property type="gene ID" value="ENSG00000089335.22"/>
</dbReference>
<dbReference type="Ensembl" id="ENST00000505242.6">
    <molecule id="Q9NR11-2"/>
    <property type="protein sequence ID" value="ENSP00000421028.1"/>
    <property type="gene ID" value="ENSG00000089335.22"/>
</dbReference>
<dbReference type="GeneID" id="55900"/>
<dbReference type="KEGG" id="hsa:55900"/>
<dbReference type="MANE-Select" id="ENST00000505242.6">
    <molecule id="Q9NR11-2"/>
    <property type="protein sequence ID" value="ENSP00000421028.1"/>
    <property type="RefSeq nucleotide sequence ID" value="NM_001289187.2"/>
    <property type="RefSeq protein sequence ID" value="NP_001276116.1"/>
</dbReference>
<dbReference type="UCSC" id="uc002nvp.3">
    <molecule id="Q9NR11-1"/>
    <property type="organism name" value="human"/>
</dbReference>
<dbReference type="AGR" id="HGNC:13848"/>
<dbReference type="CTD" id="55900"/>
<dbReference type="GeneCards" id="ZNF302"/>
<dbReference type="HGNC" id="HGNC:13848">
    <property type="gene designation" value="ZNF302"/>
</dbReference>
<dbReference type="HPA" id="ENSG00000089335">
    <property type="expression patterns" value="Low tissue specificity"/>
</dbReference>
<dbReference type="neXtProt" id="NX_Q9NR11"/>
<dbReference type="OpenTargets" id="ENSG00000089335"/>
<dbReference type="PharmGKB" id="PA37820"/>
<dbReference type="VEuPathDB" id="HostDB:ENSG00000089335"/>
<dbReference type="eggNOG" id="KOG1721">
    <property type="taxonomic scope" value="Eukaryota"/>
</dbReference>
<dbReference type="GeneTree" id="ENSGT00940000161431"/>
<dbReference type="InParanoid" id="Q9NR11"/>
<dbReference type="OMA" id="VSNCTAH"/>
<dbReference type="OrthoDB" id="5411773at2759"/>
<dbReference type="PAN-GO" id="Q9NR11">
    <property type="GO annotations" value="4 GO annotations based on evolutionary models"/>
</dbReference>
<dbReference type="PhylomeDB" id="Q9NR11"/>
<dbReference type="TreeFam" id="TF337055"/>
<dbReference type="PathwayCommons" id="Q9NR11"/>
<dbReference type="Reactome" id="R-HSA-212436">
    <property type="pathway name" value="Generic Transcription Pathway"/>
</dbReference>
<dbReference type="SignaLink" id="Q9NR11"/>
<dbReference type="BioGRID-ORCS" id="55900">
    <property type="hits" value="12 hits in 1080 CRISPR screens"/>
</dbReference>
<dbReference type="ChiTaRS" id="ZNF302">
    <property type="organism name" value="human"/>
</dbReference>
<dbReference type="GenomeRNAi" id="55900"/>
<dbReference type="Pharos" id="Q9NR11">
    <property type="development level" value="Tdark"/>
</dbReference>
<dbReference type="PRO" id="PR:Q9NR11"/>
<dbReference type="Proteomes" id="UP000005640">
    <property type="component" value="Chromosome 19"/>
</dbReference>
<dbReference type="RNAct" id="Q9NR11">
    <property type="molecule type" value="protein"/>
</dbReference>
<dbReference type="Bgee" id="ENSG00000089335">
    <property type="expression patterns" value="Expressed in endothelial cell and 199 other cell types or tissues"/>
</dbReference>
<dbReference type="ExpressionAtlas" id="Q9NR11">
    <property type="expression patterns" value="baseline and differential"/>
</dbReference>
<dbReference type="GO" id="GO:0005634">
    <property type="term" value="C:nucleus"/>
    <property type="evidence" value="ECO:0000318"/>
    <property type="project" value="GO_Central"/>
</dbReference>
<dbReference type="GO" id="GO:0000981">
    <property type="term" value="F:DNA-binding transcription factor activity, RNA polymerase II-specific"/>
    <property type="evidence" value="ECO:0000318"/>
    <property type="project" value="GO_Central"/>
</dbReference>
<dbReference type="GO" id="GO:0000978">
    <property type="term" value="F:RNA polymerase II cis-regulatory region sequence-specific DNA binding"/>
    <property type="evidence" value="ECO:0000318"/>
    <property type="project" value="GO_Central"/>
</dbReference>
<dbReference type="GO" id="GO:0008270">
    <property type="term" value="F:zinc ion binding"/>
    <property type="evidence" value="ECO:0007669"/>
    <property type="project" value="UniProtKB-KW"/>
</dbReference>
<dbReference type="GO" id="GO:0006357">
    <property type="term" value="P:regulation of transcription by RNA polymerase II"/>
    <property type="evidence" value="ECO:0000318"/>
    <property type="project" value="GO_Central"/>
</dbReference>
<dbReference type="CDD" id="cd07765">
    <property type="entry name" value="KRAB_A-box"/>
    <property type="match status" value="1"/>
</dbReference>
<dbReference type="FunFam" id="3.30.160.60:FF:000144">
    <property type="entry name" value="zinc finger protein 181 isoform X1"/>
    <property type="match status" value="2"/>
</dbReference>
<dbReference type="FunFam" id="3.30.160.60:FF:000800">
    <property type="entry name" value="zinc finger protein 181 isoform X2"/>
    <property type="match status" value="1"/>
</dbReference>
<dbReference type="FunFam" id="3.30.160.60:FF:001292">
    <property type="entry name" value="zinc finger protein 181 isoform X2"/>
    <property type="match status" value="1"/>
</dbReference>
<dbReference type="FunFam" id="3.30.160.60:FF:000295">
    <property type="entry name" value="zinc finger protein 19"/>
    <property type="match status" value="1"/>
</dbReference>
<dbReference type="FunFam" id="3.30.160.60:FF:000352">
    <property type="entry name" value="zinc finger protein 3 homolog"/>
    <property type="match status" value="1"/>
</dbReference>
<dbReference type="FunFam" id="3.30.160.60:FF:001498">
    <property type="entry name" value="Zinc finger protein 404"/>
    <property type="match status" value="1"/>
</dbReference>
<dbReference type="Gene3D" id="6.10.140.140">
    <property type="match status" value="1"/>
</dbReference>
<dbReference type="Gene3D" id="3.30.160.60">
    <property type="entry name" value="Classic Zinc Finger"/>
    <property type="match status" value="7"/>
</dbReference>
<dbReference type="InterPro" id="IPR001909">
    <property type="entry name" value="KRAB"/>
</dbReference>
<dbReference type="InterPro" id="IPR036051">
    <property type="entry name" value="KRAB_dom_sf"/>
</dbReference>
<dbReference type="InterPro" id="IPR036236">
    <property type="entry name" value="Znf_C2H2_sf"/>
</dbReference>
<dbReference type="InterPro" id="IPR013087">
    <property type="entry name" value="Znf_C2H2_type"/>
</dbReference>
<dbReference type="PANTHER" id="PTHR24381">
    <property type="entry name" value="ZINC FINGER PROTEIN"/>
    <property type="match status" value="1"/>
</dbReference>
<dbReference type="PANTHER" id="PTHR24381:SF462">
    <property type="entry name" value="ZINC FINGER PROTEIN 566"/>
    <property type="match status" value="1"/>
</dbReference>
<dbReference type="Pfam" id="PF01352">
    <property type="entry name" value="KRAB"/>
    <property type="match status" value="1"/>
</dbReference>
<dbReference type="Pfam" id="PF00096">
    <property type="entry name" value="zf-C2H2"/>
    <property type="match status" value="7"/>
</dbReference>
<dbReference type="SMART" id="SM00349">
    <property type="entry name" value="KRAB"/>
    <property type="match status" value="1"/>
</dbReference>
<dbReference type="SMART" id="SM00355">
    <property type="entry name" value="ZnF_C2H2"/>
    <property type="match status" value="7"/>
</dbReference>
<dbReference type="SUPFAM" id="SSF57667">
    <property type="entry name" value="beta-beta-alpha zinc fingers"/>
    <property type="match status" value="4"/>
</dbReference>
<dbReference type="SUPFAM" id="SSF109640">
    <property type="entry name" value="KRAB domain (Kruppel-associated box)"/>
    <property type="match status" value="1"/>
</dbReference>
<dbReference type="PROSITE" id="PS50805">
    <property type="entry name" value="KRAB"/>
    <property type="match status" value="1"/>
</dbReference>
<dbReference type="PROSITE" id="PS00028">
    <property type="entry name" value="ZINC_FINGER_C2H2_1"/>
    <property type="match status" value="7"/>
</dbReference>
<dbReference type="PROSITE" id="PS50157">
    <property type="entry name" value="ZINC_FINGER_C2H2_2"/>
    <property type="match status" value="7"/>
</dbReference>
<feature type="chain" id="PRO_0000047522" description="Zinc finger protein 302">
    <location>
        <begin position="1"/>
        <end position="478"/>
    </location>
</feature>
<feature type="domain" description="KRAB" evidence="2">
    <location>
        <begin position="4"/>
        <end position="75"/>
    </location>
</feature>
<feature type="zinc finger region" description="C2H2-type 1" evidence="1">
    <location>
        <begin position="280"/>
        <end position="302"/>
    </location>
</feature>
<feature type="zinc finger region" description="C2H2-type 2" evidence="1">
    <location>
        <begin position="308"/>
        <end position="330"/>
    </location>
</feature>
<feature type="zinc finger region" description="C2H2-type 3" evidence="1">
    <location>
        <begin position="336"/>
        <end position="358"/>
    </location>
</feature>
<feature type="zinc finger region" description="C2H2-type 4" evidence="1">
    <location>
        <begin position="364"/>
        <end position="386"/>
    </location>
</feature>
<feature type="zinc finger region" description="C2H2-type 5" evidence="1">
    <location>
        <begin position="392"/>
        <end position="414"/>
    </location>
</feature>
<feature type="zinc finger region" description="C2H2-type 6" evidence="1">
    <location>
        <begin position="420"/>
        <end position="442"/>
    </location>
</feature>
<feature type="zinc finger region" description="C2H2-type 7" evidence="1">
    <location>
        <begin position="448"/>
        <end position="470"/>
    </location>
</feature>
<feature type="cross-link" description="Glycyl lysine isopeptide (Lys-Gly) (interchain with G-Cter in SUMO2)" evidence="8 9">
    <location>
        <position position="183"/>
    </location>
</feature>
<feature type="splice variant" id="VSP_006914" description="In isoform 2." evidence="3 4 5 6">
    <original>AYPFPLSHSVPASVNFGFSALFEHCSEVTEIFELSELCVFWVLHFLSNSPNSTVEAFSRSKKKKKKKKKRQCFAFLIYFRLGIKMGKQGIINKEGYLY</original>
    <variation>DWESRWENKELSTKKDIYD</variation>
    <location>
        <begin position="72"/>
        <end position="169"/>
    </location>
</feature>
<feature type="sequence conflict" description="In Ref. 3; AAF67475." evidence="7" ref="3">
    <original>N</original>
    <variation>H</variation>
    <location>
        <position position="451"/>
    </location>
</feature>
<feature type="sequence conflict" description="In Ref. 3; AAF67475." evidence="7" ref="3">
    <original>V</original>
    <variation>G</variation>
    <location>
        <position position="456"/>
    </location>
</feature>
<feature type="sequence conflict" description="In Ref. 3; AAF67475." evidence="7" ref="3">
    <original>V</original>
    <variation>G</variation>
    <location>
        <position position="464"/>
    </location>
</feature>
<feature type="sequence conflict" description="In Ref. 3; AAF67475." evidence="7" ref="3">
    <original>E</original>
    <variation>G</variation>
    <location>
        <position position="472"/>
    </location>
</feature>
<feature type="sequence conflict" description="In Ref. 3; AAF67475." evidence="7" ref="3">
    <original>FEV</original>
    <variation>LKFRNAGNPSTSLNH</variation>
    <location>
        <begin position="476"/>
        <end position="478"/>
    </location>
</feature>
<name>ZN302_HUMAN</name>
<keyword id="KW-0025">Alternative splicing</keyword>
<keyword id="KW-0238">DNA-binding</keyword>
<keyword id="KW-1017">Isopeptide bond</keyword>
<keyword id="KW-0479">Metal-binding</keyword>
<keyword id="KW-0539">Nucleus</keyword>
<keyword id="KW-1267">Proteomics identification</keyword>
<keyword id="KW-1185">Reference proteome</keyword>
<keyword id="KW-0677">Repeat</keyword>
<keyword id="KW-0804">Transcription</keyword>
<keyword id="KW-0805">Transcription regulation</keyword>
<keyword id="KW-0832">Ubl conjugation</keyword>
<keyword id="KW-0862">Zinc</keyword>
<keyword id="KW-0863">Zinc-finger</keyword>
<sequence length="478" mass="54814">MSQVTFSDVAIDFSHEEWACLDSAQRDLYKDVMVQNYENLVSVGLSVTKPYVIMLLEDGKEPWMMEKKLSKAYPFPLSHSVPASVNFGFSALFEHCSEVTEIFELSELCVFWVLHFLSNSPNSTVEAFSRSKKKKKKKKKRQCFAFLIYFRLGIKMGKQGIINKEGYLYEDSPQPVTMEKVVKQSYEFSNSNKNLEYTECDTFRSTFHSKSTLSEPQNNSAEGNSHKYDILKKNLSKKSVIKSERINGGKKLLNSNKSGAAFNQSKSLTLPQTCNREKIYTCSECGKAFGKQSILSRHWRIHTGEKPYECRECGKTFSHGSSLTRHQISHSGEKPYKCIECGKAFSHGSSLTNHQSTHTGEKPYECMNCGKSFSRVSLLIQHLRIHTQEKRYECRICGKAFIHSSSLIHHQKSHTGEKPYECRECGKAFCCSSHLTQHQRIHSMKKKYECNKCLKVFSSFSFLVQHQSIHTEEKPFEV</sequence>
<comment type="function">
    <text>May be involved in transcriptional regulation.</text>
</comment>
<comment type="interaction">
    <interactant intactId="EBI-3916142">
        <id>Q9NR11</id>
    </interactant>
    <interactant intactId="EBI-739624">
        <id>Q8NHQ1</id>
        <label>CEP70</label>
    </interactant>
    <organismsDiffer>false</organismsDiffer>
    <experiments>4</experiments>
</comment>
<comment type="interaction">
    <interactant intactId="EBI-12988373">
        <id>Q9NR11-2</id>
    </interactant>
    <interactant intactId="EBI-744302">
        <id>P14136</id>
        <label>GFAP</label>
    </interactant>
    <organismsDiffer>false</organismsDiffer>
    <experiments>3</experiments>
</comment>
<comment type="interaction">
    <interactant intactId="EBI-12988373">
        <id>Q9NR11-2</id>
    </interactant>
    <interactant intactId="EBI-466029">
        <id>P42858</id>
        <label>HTT</label>
    </interactant>
    <organismsDiffer>false</organismsDiffer>
    <experiments>3</experiments>
</comment>
<comment type="interaction">
    <interactant intactId="EBI-12988373">
        <id>Q9NR11-2</id>
    </interactant>
    <interactant intactId="EBI-1055254">
        <id>Q8WXH2</id>
        <label>JPH3</label>
    </interactant>
    <organismsDiffer>false</organismsDiffer>
    <experiments>3</experiments>
</comment>
<comment type="interaction">
    <interactant intactId="EBI-12988373">
        <id>Q9NR11-2</id>
    </interactant>
    <interactant intactId="EBI-12012928">
        <id>P60371</id>
        <label>KRTAP10-6</label>
    </interactant>
    <organismsDiffer>false</organismsDiffer>
    <experiments>3</experiments>
</comment>
<comment type="interaction">
    <interactant intactId="EBI-12988373">
        <id>Q9NR11-2</id>
    </interactant>
    <interactant intactId="EBI-475646">
        <id>P07196</id>
        <label>NEFL</label>
    </interactant>
    <organismsDiffer>false</organismsDiffer>
    <experiments>3</experiments>
</comment>
<comment type="interaction">
    <interactant intactId="EBI-12988373">
        <id>Q9NR11-2</id>
    </interactant>
    <interactant intactId="EBI-748974">
        <id>Q96CV9</id>
        <label>OPTN</label>
    </interactant>
    <organismsDiffer>false</organismsDiffer>
    <experiments>3</experiments>
</comment>
<comment type="interaction">
    <interactant intactId="EBI-12988373">
        <id>Q9NR11-2</id>
    </interactant>
    <interactant intactId="EBI-396669">
        <id>Q9Y3C5</id>
        <label>RNF11</label>
    </interactant>
    <organismsDiffer>false</organismsDiffer>
    <experiments>3</experiments>
</comment>
<comment type="interaction">
    <interactant intactId="EBI-12988373">
        <id>Q9NR11-2</id>
    </interactant>
    <interactant intactId="EBI-720609">
        <id>O76024</id>
        <label>WFS1</label>
    </interactant>
    <organismsDiffer>false</organismsDiffer>
    <experiments>3</experiments>
</comment>
<comment type="subcellular location">
    <subcellularLocation>
        <location evidence="7">Nucleus</location>
    </subcellularLocation>
</comment>
<comment type="alternative products">
    <event type="alternative splicing"/>
    <isoform>
        <id>Q9NR11-1</id>
        <name>1</name>
        <sequence type="displayed"/>
    </isoform>
    <isoform>
        <id>Q9NR11-2</id>
        <name>2</name>
        <sequence type="described" ref="VSP_006914"/>
    </isoform>
</comment>
<comment type="similarity">
    <text evidence="7">Belongs to the krueppel C2H2-type zinc-finger protein family.</text>
</comment>
<proteinExistence type="evidence at protein level"/>
<organism>
    <name type="scientific">Homo sapiens</name>
    <name type="common">Human</name>
    <dbReference type="NCBI Taxonomy" id="9606"/>
    <lineage>
        <taxon>Eukaryota</taxon>
        <taxon>Metazoa</taxon>
        <taxon>Chordata</taxon>
        <taxon>Craniata</taxon>
        <taxon>Vertebrata</taxon>
        <taxon>Euteleostomi</taxon>
        <taxon>Mammalia</taxon>
        <taxon>Eutheria</taxon>
        <taxon>Euarchontoglires</taxon>
        <taxon>Primates</taxon>
        <taxon>Haplorrhini</taxon>
        <taxon>Catarrhini</taxon>
        <taxon>Hominidae</taxon>
        <taxon>Homo</taxon>
    </lineage>
</organism>
<evidence type="ECO:0000255" key="1">
    <source>
        <dbReference type="PROSITE-ProRule" id="PRU00042"/>
    </source>
</evidence>
<evidence type="ECO:0000255" key="2">
    <source>
        <dbReference type="PROSITE-ProRule" id="PRU00119"/>
    </source>
</evidence>
<evidence type="ECO:0000303" key="3">
    <source>
    </source>
</evidence>
<evidence type="ECO:0000303" key="4">
    <source>
    </source>
</evidence>
<evidence type="ECO:0000303" key="5">
    <source ref="2"/>
</evidence>
<evidence type="ECO:0000303" key="6">
    <source ref="3"/>
</evidence>
<evidence type="ECO:0000305" key="7"/>
<evidence type="ECO:0007744" key="8">
    <source>
    </source>
</evidence>
<evidence type="ECO:0007744" key="9">
    <source>
    </source>
</evidence>